<feature type="chain" id="PRO_1000137928" description="Undecaprenyl phosphate-alpha-4-amino-4-deoxy-L-arabinose arabinosyl transferase">
    <location>
        <begin position="1"/>
        <end position="551"/>
    </location>
</feature>
<feature type="transmembrane region" description="Helical" evidence="1">
    <location>
        <begin position="8"/>
        <end position="28"/>
    </location>
</feature>
<feature type="transmembrane region" description="Helical" evidence="1">
    <location>
        <begin position="81"/>
        <end position="101"/>
    </location>
</feature>
<feature type="transmembrane region" description="Helical" evidence="1">
    <location>
        <begin position="111"/>
        <end position="131"/>
    </location>
</feature>
<feature type="transmembrane region" description="Helical" evidence="1">
    <location>
        <begin position="132"/>
        <end position="152"/>
    </location>
</feature>
<feature type="transmembrane region" description="Helical" evidence="1">
    <location>
        <begin position="176"/>
        <end position="196"/>
    </location>
</feature>
<feature type="transmembrane region" description="Helical" evidence="1">
    <location>
        <begin position="207"/>
        <end position="227"/>
    </location>
</feature>
<feature type="transmembrane region" description="Helical" evidence="1">
    <location>
        <begin position="255"/>
        <end position="275"/>
    </location>
</feature>
<feature type="transmembrane region" description="Helical" evidence="1">
    <location>
        <begin position="291"/>
        <end position="311"/>
    </location>
</feature>
<feature type="transmembrane region" description="Helical" evidence="1">
    <location>
        <begin position="313"/>
        <end position="333"/>
    </location>
</feature>
<feature type="transmembrane region" description="Helical" evidence="1">
    <location>
        <begin position="349"/>
        <end position="369"/>
    </location>
</feature>
<feature type="transmembrane region" description="Helical" evidence="1">
    <location>
        <begin position="380"/>
        <end position="400"/>
    </location>
</feature>
<feature type="transmembrane region" description="Helical" evidence="1">
    <location>
        <begin position="408"/>
        <end position="428"/>
    </location>
</feature>
<organism>
    <name type="scientific">Klebsiella pneumoniae (strain 342)</name>
    <dbReference type="NCBI Taxonomy" id="507522"/>
    <lineage>
        <taxon>Bacteria</taxon>
        <taxon>Pseudomonadati</taxon>
        <taxon>Pseudomonadota</taxon>
        <taxon>Gammaproteobacteria</taxon>
        <taxon>Enterobacterales</taxon>
        <taxon>Enterobacteriaceae</taxon>
        <taxon>Klebsiella/Raoultella group</taxon>
        <taxon>Klebsiella</taxon>
        <taxon>Klebsiella pneumoniae complex</taxon>
    </lineage>
</organism>
<name>ARNT_KLEP3</name>
<reference key="1">
    <citation type="journal article" date="2008" name="PLoS Genet.">
        <title>Complete genome sequence of the N2-fixing broad host range endophyte Klebsiella pneumoniae 342 and virulence predictions verified in mice.</title>
        <authorList>
            <person name="Fouts D.E."/>
            <person name="Tyler H.L."/>
            <person name="DeBoy R.T."/>
            <person name="Daugherty S."/>
            <person name="Ren Q."/>
            <person name="Badger J.H."/>
            <person name="Durkin A.S."/>
            <person name="Huot H."/>
            <person name="Shrivastava S."/>
            <person name="Kothari S."/>
            <person name="Dodson R.J."/>
            <person name="Mohamoud Y."/>
            <person name="Khouri H."/>
            <person name="Roesch L.F.W."/>
            <person name="Krogfelt K.A."/>
            <person name="Struve C."/>
            <person name="Triplett E.W."/>
            <person name="Methe B.A."/>
        </authorList>
    </citation>
    <scope>NUCLEOTIDE SEQUENCE [LARGE SCALE GENOMIC DNA]</scope>
    <source>
        <strain>342</strain>
    </source>
</reference>
<dbReference type="EC" id="2.4.2.43" evidence="1"/>
<dbReference type="EMBL" id="CP000964">
    <property type="protein sequence ID" value="ACI11547.1"/>
    <property type="molecule type" value="Genomic_DNA"/>
</dbReference>
<dbReference type="SMR" id="B5XTL1"/>
<dbReference type="CAZy" id="GT83">
    <property type="family name" value="Glycosyltransferase Family 83"/>
</dbReference>
<dbReference type="KEGG" id="kpe:KPK_0270"/>
<dbReference type="HOGENOM" id="CLU_019200_2_1_6"/>
<dbReference type="UniPathway" id="UPA00037"/>
<dbReference type="Proteomes" id="UP000001734">
    <property type="component" value="Chromosome"/>
</dbReference>
<dbReference type="GO" id="GO:0005886">
    <property type="term" value="C:plasma membrane"/>
    <property type="evidence" value="ECO:0007669"/>
    <property type="project" value="UniProtKB-SubCell"/>
</dbReference>
<dbReference type="GO" id="GO:0103015">
    <property type="term" value="F:4-amino-4-deoxy-L-arabinose transferase activity"/>
    <property type="evidence" value="ECO:0007669"/>
    <property type="project" value="UniProtKB-EC"/>
</dbReference>
<dbReference type="GO" id="GO:0000030">
    <property type="term" value="F:mannosyltransferase activity"/>
    <property type="evidence" value="ECO:0007669"/>
    <property type="project" value="InterPro"/>
</dbReference>
<dbReference type="GO" id="GO:0009245">
    <property type="term" value="P:lipid A biosynthetic process"/>
    <property type="evidence" value="ECO:0007669"/>
    <property type="project" value="UniProtKB-UniRule"/>
</dbReference>
<dbReference type="GO" id="GO:0009103">
    <property type="term" value="P:lipopolysaccharide biosynthetic process"/>
    <property type="evidence" value="ECO:0007669"/>
    <property type="project" value="UniProtKB-KW"/>
</dbReference>
<dbReference type="GO" id="GO:0006493">
    <property type="term" value="P:protein O-linked glycosylation"/>
    <property type="evidence" value="ECO:0007669"/>
    <property type="project" value="InterPro"/>
</dbReference>
<dbReference type="GO" id="GO:0010041">
    <property type="term" value="P:response to iron(III) ion"/>
    <property type="evidence" value="ECO:0007669"/>
    <property type="project" value="TreeGrafter"/>
</dbReference>
<dbReference type="HAMAP" id="MF_01165">
    <property type="entry name" value="ArnT_transfer"/>
    <property type="match status" value="1"/>
</dbReference>
<dbReference type="InterPro" id="IPR022839">
    <property type="entry name" value="ArnT_tfrase"/>
</dbReference>
<dbReference type="InterPro" id="IPR003342">
    <property type="entry name" value="Glyco_trans_39/83"/>
</dbReference>
<dbReference type="InterPro" id="IPR050297">
    <property type="entry name" value="LipidA_mod_glycosyltrf_83"/>
</dbReference>
<dbReference type="NCBIfam" id="NF009784">
    <property type="entry name" value="PRK13279.1"/>
    <property type="match status" value="1"/>
</dbReference>
<dbReference type="PANTHER" id="PTHR33908">
    <property type="entry name" value="MANNOSYLTRANSFERASE YKCB-RELATED"/>
    <property type="match status" value="1"/>
</dbReference>
<dbReference type="PANTHER" id="PTHR33908:SF3">
    <property type="entry name" value="UNDECAPRENYL PHOSPHATE-ALPHA-4-AMINO-4-DEOXY-L-ARABINOSE ARABINOSYL TRANSFERASE"/>
    <property type="match status" value="1"/>
</dbReference>
<dbReference type="Pfam" id="PF02366">
    <property type="entry name" value="PMT"/>
    <property type="match status" value="1"/>
</dbReference>
<proteinExistence type="inferred from homology"/>
<evidence type="ECO:0000255" key="1">
    <source>
        <dbReference type="HAMAP-Rule" id="MF_01165"/>
    </source>
</evidence>
<comment type="function">
    <text evidence="1">Catalyzes the transfer of the L-Ara4N moiety of the glycolipid undecaprenyl phosphate-alpha-L-Ara4N to lipid A. The modified arabinose is attached to lipid A and is required for resistance to polymyxin and cationic antimicrobial peptides.</text>
</comment>
<comment type="catalytic activity">
    <reaction evidence="1">
        <text>4-amino-4-deoxy-alpha-L-arabinopyranosyl di-trans,octa-cis-undecaprenyl phosphate + lipid IVA = lipid IIA + di-trans,octa-cis-undecaprenyl phosphate.</text>
        <dbReference type="EC" id="2.4.2.43"/>
    </reaction>
</comment>
<comment type="pathway">
    <text evidence="1">Lipopolysaccharide metabolism; 4-amino-4-deoxy-beta-L-arabinose-lipid A biosynthesis.</text>
</comment>
<comment type="subcellular location">
    <subcellularLocation>
        <location evidence="1">Cell inner membrane</location>
        <topology evidence="1">Multi-pass membrane protein</topology>
    </subcellularLocation>
</comment>
<comment type="similarity">
    <text evidence="1">Belongs to the glycosyltransferase 83 family.</text>
</comment>
<accession>B5XTL1</accession>
<sequence>MKSIRYGVSLIALFALYYLLPLNFRLLWQPDETRYAEISREMLATGDWVVPHFLGLRYFEKPIAGYWINSIGQWLFGHNNFGVRFGSVFAITMTALLVAWLAWRVFRDKKVAVLSPVIFLTAMLVYAIGTYAVLDPMITLWLALAMCSFWGAAQAQSRSGKILGYALLGVACGMGVMTKGFLALAVPVVGVLPWVIARKRWREVLTYGWLAVIVCTLVVLPWGLAIAQREPDFWRYFFWVEHIQRFAEKDAQHKAPFWYYIPFLIAGSLPWLALLPGALKRGWLERDEARGALYLLGWVAMPFLFFSIAKGKLPTYILPCFAPLSILMARYALEAAKTGAKALRINGMINLGVGLLGLIAVLVVSPWGVMHKPVWTKIELYKCLLAAIAFAVWALMGWLAMKNPGRRWSLAALCPLGLALLVGFAIPDRVIDSKQPQFLVDIVSESLQPSRYVLTNNVGIAGGLAWELKRSDIIMFDKQGELKYGLDWPDAQGSFVSQAGFADWLATHRQQGPVSLVLLMDKGESMVDLPLPKPDNAYELGRVVFLQYLPQ</sequence>
<gene>
    <name evidence="1" type="primary">arnT</name>
    <name type="ordered locus">KPK_0270</name>
</gene>
<protein>
    <recommendedName>
        <fullName evidence="1">Undecaprenyl phosphate-alpha-4-amino-4-deoxy-L-arabinose arabinosyl transferase</fullName>
        <ecNumber evidence="1">2.4.2.43</ecNumber>
    </recommendedName>
    <alternativeName>
        <fullName evidence="1">4-amino-4-deoxy-L-arabinose lipid A transferase</fullName>
    </alternativeName>
    <alternativeName>
        <fullName evidence="1">Lipid IV(A) 4-amino-4-deoxy-L-arabinosyltransferase</fullName>
    </alternativeName>
    <alternativeName>
        <fullName evidence="1">Undecaprenyl phosphate-alpha-L-Ara4N transferase</fullName>
    </alternativeName>
</protein>
<keyword id="KW-0997">Cell inner membrane</keyword>
<keyword id="KW-1003">Cell membrane</keyword>
<keyword id="KW-0328">Glycosyltransferase</keyword>
<keyword id="KW-0441">Lipid A biosynthesis</keyword>
<keyword id="KW-0444">Lipid biosynthesis</keyword>
<keyword id="KW-0443">Lipid metabolism</keyword>
<keyword id="KW-0448">Lipopolysaccharide biosynthesis</keyword>
<keyword id="KW-0472">Membrane</keyword>
<keyword id="KW-0808">Transferase</keyword>
<keyword id="KW-0812">Transmembrane</keyword>
<keyword id="KW-1133">Transmembrane helix</keyword>